<dbReference type="EC" id="2.7.8.7" evidence="1"/>
<dbReference type="EMBL" id="CP001097">
    <property type="protein sequence ID" value="ACD91162.1"/>
    <property type="molecule type" value="Genomic_DNA"/>
</dbReference>
<dbReference type="RefSeq" id="WP_012467031.1">
    <property type="nucleotide sequence ID" value="NC_010803.1"/>
</dbReference>
<dbReference type="SMR" id="B3EGP9"/>
<dbReference type="STRING" id="290315.Clim_2138"/>
<dbReference type="KEGG" id="cli:Clim_2138"/>
<dbReference type="eggNOG" id="COG0736">
    <property type="taxonomic scope" value="Bacteria"/>
</dbReference>
<dbReference type="HOGENOM" id="CLU_089696_0_2_10"/>
<dbReference type="OrthoDB" id="517356at2"/>
<dbReference type="Proteomes" id="UP000008841">
    <property type="component" value="Chromosome"/>
</dbReference>
<dbReference type="GO" id="GO:0005737">
    <property type="term" value="C:cytoplasm"/>
    <property type="evidence" value="ECO:0007669"/>
    <property type="project" value="UniProtKB-SubCell"/>
</dbReference>
<dbReference type="GO" id="GO:0008897">
    <property type="term" value="F:holo-[acyl-carrier-protein] synthase activity"/>
    <property type="evidence" value="ECO:0007669"/>
    <property type="project" value="UniProtKB-UniRule"/>
</dbReference>
<dbReference type="GO" id="GO:0000287">
    <property type="term" value="F:magnesium ion binding"/>
    <property type="evidence" value="ECO:0007669"/>
    <property type="project" value="UniProtKB-UniRule"/>
</dbReference>
<dbReference type="GO" id="GO:0006633">
    <property type="term" value="P:fatty acid biosynthetic process"/>
    <property type="evidence" value="ECO:0007669"/>
    <property type="project" value="UniProtKB-UniRule"/>
</dbReference>
<dbReference type="Gene3D" id="3.90.470.20">
    <property type="entry name" value="4'-phosphopantetheinyl transferase domain"/>
    <property type="match status" value="1"/>
</dbReference>
<dbReference type="HAMAP" id="MF_00101">
    <property type="entry name" value="AcpS"/>
    <property type="match status" value="1"/>
</dbReference>
<dbReference type="InterPro" id="IPR008278">
    <property type="entry name" value="4-PPantetheinyl_Trfase_dom"/>
</dbReference>
<dbReference type="InterPro" id="IPR037143">
    <property type="entry name" value="4-PPantetheinyl_Trfase_dom_sf"/>
</dbReference>
<dbReference type="InterPro" id="IPR002582">
    <property type="entry name" value="ACPS"/>
</dbReference>
<dbReference type="InterPro" id="IPR004568">
    <property type="entry name" value="Ppantetheine-prot_Trfase_dom"/>
</dbReference>
<dbReference type="NCBIfam" id="TIGR00516">
    <property type="entry name" value="acpS"/>
    <property type="match status" value="1"/>
</dbReference>
<dbReference type="NCBIfam" id="TIGR00556">
    <property type="entry name" value="pantethn_trn"/>
    <property type="match status" value="1"/>
</dbReference>
<dbReference type="Pfam" id="PF01648">
    <property type="entry name" value="ACPS"/>
    <property type="match status" value="1"/>
</dbReference>
<dbReference type="SUPFAM" id="SSF56214">
    <property type="entry name" value="4'-phosphopantetheinyl transferase"/>
    <property type="match status" value="1"/>
</dbReference>
<proteinExistence type="inferred from homology"/>
<accession>B3EGP9</accession>
<protein>
    <recommendedName>
        <fullName evidence="1">Holo-[acyl-carrier-protein] synthase</fullName>
        <shortName evidence="1">Holo-ACP synthase</shortName>
        <ecNumber evidence="1">2.7.8.7</ecNumber>
    </recommendedName>
    <alternativeName>
        <fullName evidence="1">4'-phosphopantetheinyl transferase AcpS</fullName>
    </alternativeName>
</protein>
<keyword id="KW-0963">Cytoplasm</keyword>
<keyword id="KW-0275">Fatty acid biosynthesis</keyword>
<keyword id="KW-0276">Fatty acid metabolism</keyword>
<keyword id="KW-0444">Lipid biosynthesis</keyword>
<keyword id="KW-0443">Lipid metabolism</keyword>
<keyword id="KW-0460">Magnesium</keyword>
<keyword id="KW-0479">Metal-binding</keyword>
<keyword id="KW-0808">Transferase</keyword>
<evidence type="ECO:0000255" key="1">
    <source>
        <dbReference type="HAMAP-Rule" id="MF_00101"/>
    </source>
</evidence>
<comment type="function">
    <text evidence="1">Transfers the 4'-phosphopantetheine moiety from coenzyme A to a Ser of acyl-carrier-protein.</text>
</comment>
<comment type="catalytic activity">
    <reaction evidence="1">
        <text>apo-[ACP] + CoA = holo-[ACP] + adenosine 3',5'-bisphosphate + H(+)</text>
        <dbReference type="Rhea" id="RHEA:12068"/>
        <dbReference type="Rhea" id="RHEA-COMP:9685"/>
        <dbReference type="Rhea" id="RHEA-COMP:9690"/>
        <dbReference type="ChEBI" id="CHEBI:15378"/>
        <dbReference type="ChEBI" id="CHEBI:29999"/>
        <dbReference type="ChEBI" id="CHEBI:57287"/>
        <dbReference type="ChEBI" id="CHEBI:58343"/>
        <dbReference type="ChEBI" id="CHEBI:64479"/>
        <dbReference type="EC" id="2.7.8.7"/>
    </reaction>
</comment>
<comment type="cofactor">
    <cofactor evidence="1">
        <name>Mg(2+)</name>
        <dbReference type="ChEBI" id="CHEBI:18420"/>
    </cofactor>
</comment>
<comment type="subcellular location">
    <subcellularLocation>
        <location evidence="1">Cytoplasm</location>
    </subcellularLocation>
</comment>
<comment type="similarity">
    <text evidence="1">Belongs to the P-Pant transferase superfamily. AcpS family.</text>
</comment>
<sequence>MEIGVDIVELERIRNAWNRYGLAFLNRFLTAGEIVYCLEKKDPAASIAGRFAAKEALVKAMGTGISGKVRWQSFEILNDAKGKPVVHITGTDLSSLVRSARVSISHDRHSAIAMAIISLEPVAGSR</sequence>
<organism>
    <name type="scientific">Chlorobium limicola (strain DSM 245 / NBRC 103803 / 6330)</name>
    <dbReference type="NCBI Taxonomy" id="290315"/>
    <lineage>
        <taxon>Bacteria</taxon>
        <taxon>Pseudomonadati</taxon>
        <taxon>Chlorobiota</taxon>
        <taxon>Chlorobiia</taxon>
        <taxon>Chlorobiales</taxon>
        <taxon>Chlorobiaceae</taxon>
        <taxon>Chlorobium/Pelodictyon group</taxon>
        <taxon>Chlorobium</taxon>
    </lineage>
</organism>
<gene>
    <name evidence="1" type="primary">acpS</name>
    <name type="ordered locus">Clim_2138</name>
</gene>
<reference key="1">
    <citation type="submission" date="2008-05" db="EMBL/GenBank/DDBJ databases">
        <title>Complete sequence of Chlorobium limicola DSM 245.</title>
        <authorList>
            <consortium name="US DOE Joint Genome Institute"/>
            <person name="Lucas S."/>
            <person name="Copeland A."/>
            <person name="Lapidus A."/>
            <person name="Glavina del Rio T."/>
            <person name="Dalin E."/>
            <person name="Tice H."/>
            <person name="Bruce D."/>
            <person name="Goodwin L."/>
            <person name="Pitluck S."/>
            <person name="Schmutz J."/>
            <person name="Larimer F."/>
            <person name="Land M."/>
            <person name="Hauser L."/>
            <person name="Kyrpides N."/>
            <person name="Ovchinnikova G."/>
            <person name="Zhao F."/>
            <person name="Li T."/>
            <person name="Liu Z."/>
            <person name="Overmann J."/>
            <person name="Bryant D.A."/>
            <person name="Richardson P."/>
        </authorList>
    </citation>
    <scope>NUCLEOTIDE SEQUENCE [LARGE SCALE GENOMIC DNA]</scope>
    <source>
        <strain>DSM 245 / NBRC 103803 / 6330</strain>
    </source>
</reference>
<feature type="chain" id="PRO_1000093864" description="Holo-[acyl-carrier-protein] synthase">
    <location>
        <begin position="1"/>
        <end position="126"/>
    </location>
</feature>
<feature type="binding site" evidence="1">
    <location>
        <position position="6"/>
    </location>
    <ligand>
        <name>Mg(2+)</name>
        <dbReference type="ChEBI" id="CHEBI:18420"/>
    </ligand>
</feature>
<feature type="binding site" evidence="1">
    <location>
        <position position="55"/>
    </location>
    <ligand>
        <name>Mg(2+)</name>
        <dbReference type="ChEBI" id="CHEBI:18420"/>
    </ligand>
</feature>
<name>ACPS_CHLL2</name>